<comment type="cofactor">
    <cofactor evidence="1">
        <name>Zn(2+)</name>
        <dbReference type="ChEBI" id="CHEBI:29105"/>
    </cofactor>
    <text evidence="1">Binds 1 zinc ion per subunit.</text>
</comment>
<comment type="similarity">
    <text evidence="4">Belongs to the peptidase M10A family.</text>
</comment>
<dbReference type="EC" id="3.4.24.-"/>
<dbReference type="EMBL" id="EF133465">
    <property type="protein sequence ID" value="ABO37206.1"/>
    <property type="molecule type" value="Genomic_DNA"/>
</dbReference>
<dbReference type="RefSeq" id="YP_001110872.1">
    <property type="nucleotide sequence ID" value="NC_009233.1"/>
</dbReference>
<dbReference type="SMR" id="A4KX75"/>
<dbReference type="KEGG" id="vg:5076115"/>
<dbReference type="OrthoDB" id="4353at10239"/>
<dbReference type="Proteomes" id="UP000001324">
    <property type="component" value="Genome"/>
</dbReference>
<dbReference type="GO" id="GO:0005615">
    <property type="term" value="C:extracellular space"/>
    <property type="evidence" value="ECO:0007669"/>
    <property type="project" value="TreeGrafter"/>
</dbReference>
<dbReference type="GO" id="GO:0004222">
    <property type="term" value="F:metalloendopeptidase activity"/>
    <property type="evidence" value="ECO:0007669"/>
    <property type="project" value="InterPro"/>
</dbReference>
<dbReference type="GO" id="GO:0008270">
    <property type="term" value="F:zinc ion binding"/>
    <property type="evidence" value="ECO:0007669"/>
    <property type="project" value="InterPro"/>
</dbReference>
<dbReference type="GO" id="GO:0030574">
    <property type="term" value="P:collagen catabolic process"/>
    <property type="evidence" value="ECO:0007669"/>
    <property type="project" value="TreeGrafter"/>
</dbReference>
<dbReference type="GO" id="GO:0030198">
    <property type="term" value="P:extracellular matrix organization"/>
    <property type="evidence" value="ECO:0007669"/>
    <property type="project" value="TreeGrafter"/>
</dbReference>
<dbReference type="GO" id="GO:0006508">
    <property type="term" value="P:proteolysis"/>
    <property type="evidence" value="ECO:0007669"/>
    <property type="project" value="UniProtKB-KW"/>
</dbReference>
<dbReference type="Gene3D" id="3.40.390.10">
    <property type="entry name" value="Collagenase (Catalytic Domain)"/>
    <property type="match status" value="1"/>
</dbReference>
<dbReference type="Gene3D" id="2.110.10.10">
    <property type="entry name" value="Hemopexin-like domain"/>
    <property type="match status" value="1"/>
</dbReference>
<dbReference type="InterPro" id="IPR036375">
    <property type="entry name" value="Hemopexin-like_dom_sf"/>
</dbReference>
<dbReference type="InterPro" id="IPR018487">
    <property type="entry name" value="Hemopexin-like_repeat"/>
</dbReference>
<dbReference type="InterPro" id="IPR024079">
    <property type="entry name" value="MetalloPept_cat_dom_sf"/>
</dbReference>
<dbReference type="InterPro" id="IPR001818">
    <property type="entry name" value="Pept_M10_metallopeptidase"/>
</dbReference>
<dbReference type="InterPro" id="IPR021190">
    <property type="entry name" value="Pept_M10A"/>
</dbReference>
<dbReference type="InterPro" id="IPR006026">
    <property type="entry name" value="Peptidase_Metallo"/>
</dbReference>
<dbReference type="PANTHER" id="PTHR10201">
    <property type="entry name" value="MATRIX METALLOPROTEINASE"/>
    <property type="match status" value="1"/>
</dbReference>
<dbReference type="PANTHER" id="PTHR10201:SF291">
    <property type="entry name" value="MATRIX METALLOPROTEINASE 1, ISOFORM C-RELATED"/>
    <property type="match status" value="1"/>
</dbReference>
<dbReference type="Pfam" id="PF00413">
    <property type="entry name" value="Peptidase_M10"/>
    <property type="match status" value="1"/>
</dbReference>
<dbReference type="PRINTS" id="PR00138">
    <property type="entry name" value="MATRIXIN"/>
</dbReference>
<dbReference type="SMART" id="SM00235">
    <property type="entry name" value="ZnMc"/>
    <property type="match status" value="1"/>
</dbReference>
<dbReference type="SUPFAM" id="SSF50923">
    <property type="entry name" value="Hemopexin-like domain"/>
    <property type="match status" value="1"/>
</dbReference>
<dbReference type="SUPFAM" id="SSF55486">
    <property type="entry name" value="Metalloproteases ('zincins'), catalytic domain"/>
    <property type="match status" value="1"/>
</dbReference>
<dbReference type="PROSITE" id="PS51642">
    <property type="entry name" value="HEMOPEXIN_2"/>
    <property type="match status" value="1"/>
</dbReference>
<dbReference type="PROSITE" id="PS00142">
    <property type="entry name" value="ZINC_PROTEASE"/>
    <property type="match status" value="1"/>
</dbReference>
<proteinExistence type="inferred from homology"/>
<organism>
    <name type="scientific">Heliothis virescens ascovirus 3e</name>
    <name type="common">HvAV-3e</name>
    <dbReference type="NCBI Taxonomy" id="260797"/>
    <lineage>
        <taxon>Viruses</taxon>
        <taxon>Varidnaviria</taxon>
        <taxon>Bamfordvirae</taxon>
        <taxon>Nucleocytoviricota</taxon>
        <taxon>Megaviricetes</taxon>
        <taxon>Pimascovirales</taxon>
        <taxon>Ascoviridae</taxon>
        <taxon>Ascovirus</taxon>
        <taxon>Ascovirus TnAV2a</taxon>
    </lineage>
</organism>
<name>MMP_HVAVE</name>
<protein>
    <recommendedName>
        <fullName>Putative matrix metalloproteinase</fullName>
        <ecNumber>3.4.24.-</ecNumber>
    </recommendedName>
</protein>
<keyword id="KW-0378">Hydrolase</keyword>
<keyword id="KW-0479">Metal-binding</keyword>
<keyword id="KW-0482">Metalloprotease</keyword>
<keyword id="KW-0645">Protease</keyword>
<keyword id="KW-1185">Reference proteome</keyword>
<keyword id="KW-0732">Signal</keyword>
<keyword id="KW-0862">Zinc</keyword>
<keyword id="KW-0865">Zymogen</keyword>
<reference key="1">
    <citation type="journal article" date="2007" name="J. Gen. Virol.">
        <title>Sequence and organization of the Heliothis virescens ascovirus genome.</title>
        <authorList>
            <person name="Asgari S."/>
            <person name="Davis J."/>
            <person name="Wood D."/>
            <person name="Wilson P."/>
            <person name="McGrath A."/>
        </authorList>
    </citation>
    <scope>NUCLEOTIDE SEQUENCE [LARGE SCALE GENOMIC DNA]</scope>
</reference>
<organismHost>
    <name type="scientific">Noctuidae</name>
    <name type="common">owlet moths</name>
    <dbReference type="NCBI Taxonomy" id="7100"/>
</organismHost>
<accession>A4KX75</accession>
<feature type="signal peptide" evidence="2">
    <location>
        <begin position="1"/>
        <end position="17"/>
    </location>
</feature>
<feature type="chain" id="PRO_0000330606" description="Putative matrix metalloproteinase">
    <location>
        <begin position="18"/>
        <end position="474"/>
    </location>
</feature>
<feature type="repeat" description="Hemopexin">
    <location>
        <begin position="299"/>
        <end position="344"/>
    </location>
</feature>
<feature type="active site" evidence="3">
    <location>
        <position position="190"/>
    </location>
</feature>
<feature type="binding site" evidence="3">
    <location>
        <position position="189"/>
    </location>
    <ligand>
        <name>Zn(2+)</name>
        <dbReference type="ChEBI" id="CHEBI:29105"/>
        <note>catalytic</note>
    </ligand>
</feature>
<feature type="binding site" evidence="3">
    <location>
        <position position="193"/>
    </location>
    <ligand>
        <name>Zn(2+)</name>
        <dbReference type="ChEBI" id="CHEBI:29105"/>
        <note>catalytic</note>
    </ligand>
</feature>
<feature type="binding site" evidence="3">
    <location>
        <position position="199"/>
    </location>
    <ligand>
        <name>Zn(2+)</name>
        <dbReference type="ChEBI" id="CHEBI:29105"/>
        <note>catalytic</note>
    </ligand>
</feature>
<evidence type="ECO:0000250" key="1"/>
<evidence type="ECO:0000255" key="2"/>
<evidence type="ECO:0000255" key="3">
    <source>
        <dbReference type="PROSITE-ProRule" id="PRU10095"/>
    </source>
</evidence>
<evidence type="ECO:0000305" key="4"/>
<gene>
    <name type="ORF">ORF20</name>
</gene>
<sequence>MIIYFAVITCSLKLCRSYYKMLLNVSHTIQCVFSRMSWYTLAVILSTLVTIHASQGPEKFTLATAIVLKRGEDITWSVSRENLKYNYRTVVDTTSKAFAVWHTAGLNFRFVYNYSEAMIRISFKRRFHGEIGYDFDGLGSLLAHAYLPNQGDLSSEIHLDNDEIFSFSMKDSDYEGDNAPTSYFWTVLHEIGHSLGVQHSASPSSIMYGWYKSRSFGNGTIVLPKDDANAIHQLYFSNTKQYAAIPKFEKNKVVTTTPVPPADRSESTTNTTITTCFSFDSLSEIKHDATKDSISAYCAGVYDAISYVRGDLYVFVGDLHWRFDTSGMLHNGYPQPTGATWRLPSGSQVNSVFEWMQYIVIQTGKRYNLFVGTDFVRSVNFKVAPSITFASNNRVYAAFLGKLKDITGHLLRRKNLRWRYLPPIQLLQNELRAATDILVASNGMYIFKSGVHGVVVNGVVEHYKLNKGVWSNCR</sequence>